<dbReference type="EMBL" id="CP000036">
    <property type="protein sequence ID" value="ABB64824.1"/>
    <property type="molecule type" value="Genomic_DNA"/>
</dbReference>
<dbReference type="RefSeq" id="WP_000005042.1">
    <property type="nucleotide sequence ID" value="NC_007613.1"/>
</dbReference>
<dbReference type="SMR" id="Q326D4"/>
<dbReference type="GeneID" id="93777334"/>
<dbReference type="KEGG" id="sbo:SBO_0089"/>
<dbReference type="HOGENOM" id="CLU_178280_3_1_6"/>
<dbReference type="Proteomes" id="UP000007067">
    <property type="component" value="Chromosome"/>
</dbReference>
<dbReference type="GO" id="GO:0008657">
    <property type="term" value="F:DNA topoisomerase type II (double strand cut, ATP-hydrolyzing) inhibitor activity"/>
    <property type="evidence" value="ECO:0007669"/>
    <property type="project" value="UniProtKB-UniRule"/>
</dbReference>
<dbReference type="GO" id="GO:0008270">
    <property type="term" value="F:zinc ion binding"/>
    <property type="evidence" value="ECO:0007669"/>
    <property type="project" value="UniProtKB-UniRule"/>
</dbReference>
<dbReference type="GO" id="GO:0006355">
    <property type="term" value="P:regulation of DNA-templated transcription"/>
    <property type="evidence" value="ECO:0007669"/>
    <property type="project" value="InterPro"/>
</dbReference>
<dbReference type="FunFam" id="3.30.50.10:FF:000026">
    <property type="entry name" value="DNA gyrase inhibitor YacG"/>
    <property type="match status" value="1"/>
</dbReference>
<dbReference type="Gene3D" id="3.30.50.10">
    <property type="entry name" value="Erythroid Transcription Factor GATA-1, subunit A"/>
    <property type="match status" value="1"/>
</dbReference>
<dbReference type="HAMAP" id="MF_00649">
    <property type="entry name" value="DNA_gyrase_inhibitor_YacG"/>
    <property type="match status" value="1"/>
</dbReference>
<dbReference type="InterPro" id="IPR005584">
    <property type="entry name" value="DNA_gyrase_inhibitor_YacG"/>
</dbReference>
<dbReference type="InterPro" id="IPR013088">
    <property type="entry name" value="Znf_NHR/GATA"/>
</dbReference>
<dbReference type="NCBIfam" id="NF001638">
    <property type="entry name" value="PRK00418.1"/>
    <property type="match status" value="1"/>
</dbReference>
<dbReference type="PANTHER" id="PTHR36150">
    <property type="entry name" value="DNA GYRASE INHIBITOR YACG"/>
    <property type="match status" value="1"/>
</dbReference>
<dbReference type="PANTHER" id="PTHR36150:SF1">
    <property type="entry name" value="DNA GYRASE INHIBITOR YACG"/>
    <property type="match status" value="1"/>
</dbReference>
<dbReference type="Pfam" id="PF03884">
    <property type="entry name" value="YacG"/>
    <property type="match status" value="1"/>
</dbReference>
<dbReference type="SUPFAM" id="SSF57716">
    <property type="entry name" value="Glucocorticoid receptor-like (DNA-binding domain)"/>
    <property type="match status" value="1"/>
</dbReference>
<proteinExistence type="inferred from homology"/>
<feature type="chain" id="PRO_1000056997" description="DNA gyrase inhibitor YacG">
    <location>
        <begin position="1"/>
        <end position="65"/>
    </location>
</feature>
<feature type="region of interest" description="Disordered" evidence="2">
    <location>
        <begin position="45"/>
        <end position="65"/>
    </location>
</feature>
<feature type="compositionally biased region" description="Acidic residues" evidence="2">
    <location>
        <begin position="54"/>
        <end position="65"/>
    </location>
</feature>
<feature type="binding site" evidence="1">
    <location>
        <position position="9"/>
    </location>
    <ligand>
        <name>Zn(2+)</name>
        <dbReference type="ChEBI" id="CHEBI:29105"/>
    </ligand>
</feature>
<feature type="binding site" evidence="1">
    <location>
        <position position="12"/>
    </location>
    <ligand>
        <name>Zn(2+)</name>
        <dbReference type="ChEBI" id="CHEBI:29105"/>
    </ligand>
</feature>
<feature type="binding site" evidence="1">
    <location>
        <position position="28"/>
    </location>
    <ligand>
        <name>Zn(2+)</name>
        <dbReference type="ChEBI" id="CHEBI:29105"/>
    </ligand>
</feature>
<feature type="binding site" evidence="1">
    <location>
        <position position="32"/>
    </location>
    <ligand>
        <name>Zn(2+)</name>
        <dbReference type="ChEBI" id="CHEBI:29105"/>
    </ligand>
</feature>
<protein>
    <recommendedName>
        <fullName evidence="1">DNA gyrase inhibitor YacG</fullName>
    </recommendedName>
</protein>
<evidence type="ECO:0000255" key="1">
    <source>
        <dbReference type="HAMAP-Rule" id="MF_00649"/>
    </source>
</evidence>
<evidence type="ECO:0000256" key="2">
    <source>
        <dbReference type="SAM" id="MobiDB-lite"/>
    </source>
</evidence>
<gene>
    <name evidence="1" type="primary">yacG</name>
    <name type="ordered locus">SBO_0089</name>
</gene>
<name>YACG_SHIBS</name>
<accession>Q326D4</accession>
<comment type="function">
    <text evidence="1">Inhibits all the catalytic activities of DNA gyrase by preventing its interaction with DNA. Acts by binding directly to the C-terminal domain of GyrB, which probably disrupts DNA binding by the gyrase.</text>
</comment>
<comment type="cofactor">
    <cofactor evidence="1">
        <name>Zn(2+)</name>
        <dbReference type="ChEBI" id="CHEBI:29105"/>
    </cofactor>
    <text evidence="1">Binds 1 zinc ion.</text>
</comment>
<comment type="subunit">
    <text evidence="1">Interacts with GyrB.</text>
</comment>
<comment type="similarity">
    <text evidence="1">Belongs to the DNA gyrase inhibitor YacG family.</text>
</comment>
<reference key="1">
    <citation type="journal article" date="2005" name="Nucleic Acids Res.">
        <title>Genome dynamics and diversity of Shigella species, the etiologic agents of bacillary dysentery.</title>
        <authorList>
            <person name="Yang F."/>
            <person name="Yang J."/>
            <person name="Zhang X."/>
            <person name="Chen L."/>
            <person name="Jiang Y."/>
            <person name="Yan Y."/>
            <person name="Tang X."/>
            <person name="Wang J."/>
            <person name="Xiong Z."/>
            <person name="Dong J."/>
            <person name="Xue Y."/>
            <person name="Zhu Y."/>
            <person name="Xu X."/>
            <person name="Sun L."/>
            <person name="Chen S."/>
            <person name="Nie H."/>
            <person name="Peng J."/>
            <person name="Xu J."/>
            <person name="Wang Y."/>
            <person name="Yuan Z."/>
            <person name="Wen Y."/>
            <person name="Yao Z."/>
            <person name="Shen Y."/>
            <person name="Qiang B."/>
            <person name="Hou Y."/>
            <person name="Yu J."/>
            <person name="Jin Q."/>
        </authorList>
    </citation>
    <scope>NUCLEOTIDE SEQUENCE [LARGE SCALE GENOMIC DNA]</scope>
    <source>
        <strain>Sb227</strain>
    </source>
</reference>
<keyword id="KW-0479">Metal-binding</keyword>
<keyword id="KW-0862">Zinc</keyword>
<sequence length="65" mass="7306">MSETITVNCPTCGKTVVWGEISPFRPFCSKRCQLIDLGEWAAEEKRIPSSGDLSESDDWSEEPKQ</sequence>
<organism>
    <name type="scientific">Shigella boydii serotype 4 (strain Sb227)</name>
    <dbReference type="NCBI Taxonomy" id="300268"/>
    <lineage>
        <taxon>Bacteria</taxon>
        <taxon>Pseudomonadati</taxon>
        <taxon>Pseudomonadota</taxon>
        <taxon>Gammaproteobacteria</taxon>
        <taxon>Enterobacterales</taxon>
        <taxon>Enterobacteriaceae</taxon>
        <taxon>Shigella</taxon>
    </lineage>
</organism>